<gene>
    <name type="primary">CDR1</name>
</gene>
<comment type="interaction">
    <interactant intactId="EBI-2836538">
        <id>P51861</id>
    </interactant>
    <interactant intactId="EBI-638194">
        <id>P53365</id>
        <label>ARFIP2</label>
    </interactant>
    <organismsDiffer>false</organismsDiffer>
    <experiments>3</experiments>
</comment>
<comment type="interaction">
    <interactant intactId="EBI-2836538">
        <id>P51861</id>
    </interactant>
    <interactant intactId="EBI-741885">
        <id>Q96LK0</id>
        <label>CEP19</label>
    </interactant>
    <organismsDiffer>false</organismsDiffer>
    <experiments>3</experiments>
</comment>
<comment type="interaction">
    <interactant intactId="EBI-2836538">
        <id>P51861</id>
    </interactant>
    <interactant intactId="EBI-11978907">
        <id>Q9ULP0-2</id>
        <label>NDRG4</label>
    </interactant>
    <organismsDiffer>false</organismsDiffer>
    <experiments>3</experiments>
</comment>
<comment type="interaction">
    <interactant intactId="EBI-2836538">
        <id>P51861</id>
    </interactant>
    <interactant intactId="EBI-742898">
        <id>P43378</id>
        <label>PTPN9</label>
    </interactant>
    <organismsDiffer>false</organismsDiffer>
    <experiments>3</experiments>
</comment>
<comment type="interaction">
    <interactant intactId="EBI-2836538">
        <id>P51861</id>
    </interactant>
    <interactant intactId="EBI-747061">
        <id>O75800</id>
        <label>ZMYND10</label>
    </interactant>
    <organismsDiffer>false</organismsDiffer>
    <experiments>6</experiments>
</comment>
<comment type="tissue specificity">
    <text>Brain; predominantly expressed in normal neuroectodermal tissues and in certain malignant tumors.</text>
</comment>
<comment type="miscellaneous">
    <text>Autoantibodies against CDR1 are found in patients with paraneoplastic cerebellar degeneration.</text>
</comment>
<comment type="sequence caution" evidence="1">
    <conflict type="miscellaneous discrepancy">
        <sequence resource="EMBL-CDS" id="AAA51962"/>
    </conflict>
    <text>Frameshifts in positions 134, 176.</text>
</comment>
<comment type="sequence caution" evidence="1">
    <conflict type="frameshift">
        <sequence resource="EMBL-CDS" id="AAA52472"/>
    </conflict>
</comment>
<sequence>MAWLEDVDFLEDVPLLEDIPLLEDVPLLEDVPLLEDTSRLEDINLMEDMALLEDVDLLEDTDFLEDLDFSEAMDLREDKDFLEDMDSLEDMALLEDVDLLEDTDFLEDPDFLEAIDLREDKDFLEDMDSLEDLEAIGRCGFSGRHGFFGRRRFSGRPKLSGRLGLLGRRGFSGRLGGYWKTWIFWKTWIFWKTWIFRKTYIGWKTWIFSGRCGLTGRPGFGGRRRFFWKTLTDWKTWISFWKTLIDWKTWISFWKTLIDWKI</sequence>
<proteinExistence type="evidence at protein level"/>
<reference key="1">
    <citation type="journal article" date="1990" name="Proc. Natl. Acad. Sci. U.S.A.">
        <title>Cerebellar degeneration-related antigen: a highly conserved neuroectodermal marker mapped to chromosomes X in human and mouse.</title>
        <authorList>
            <person name="Chen Y.-T."/>
            <person name="Rettig W.J."/>
            <person name="Yenamandra A.K."/>
            <person name="Kozak C.A."/>
            <person name="Chaganti R.S."/>
            <person name="Posner J.B."/>
            <person name="Old L.J."/>
        </authorList>
    </citation>
    <scope>NUCLEOTIDE SEQUENCE [GENOMIC DNA]</scope>
</reference>
<reference key="2">
    <citation type="journal article" date="1987" name="Proc. Natl. Acad. Sci. U.S.A.">
        <title>Cloning of a brain protein identified by autoantibodies from a patient with paraneoplastic cerebellar degeneration.</title>
        <authorList>
            <person name="Dropcho E.J."/>
            <person name="Chen Y.-T."/>
            <person name="Posner J.B."/>
            <person name="Old L.J."/>
        </authorList>
    </citation>
    <scope>NUCLEOTIDE SEQUENCE [MRNA]</scope>
</reference>
<reference key="3">
    <citation type="journal article" date="2005" name="Nature">
        <title>The DNA sequence of the human X chromosome.</title>
        <authorList>
            <person name="Ross M.T."/>
            <person name="Grafham D.V."/>
            <person name="Coffey A.J."/>
            <person name="Scherer S."/>
            <person name="McLay K."/>
            <person name="Muzny D."/>
            <person name="Platzer M."/>
            <person name="Howell G.R."/>
            <person name="Burrows C."/>
            <person name="Bird C.P."/>
            <person name="Frankish A."/>
            <person name="Lovell F.L."/>
            <person name="Howe K.L."/>
            <person name="Ashurst J.L."/>
            <person name="Fulton R.S."/>
            <person name="Sudbrak R."/>
            <person name="Wen G."/>
            <person name="Jones M.C."/>
            <person name="Hurles M.E."/>
            <person name="Andrews T.D."/>
            <person name="Scott C.E."/>
            <person name="Searle S."/>
            <person name="Ramser J."/>
            <person name="Whittaker A."/>
            <person name="Deadman R."/>
            <person name="Carter N.P."/>
            <person name="Hunt S.E."/>
            <person name="Chen R."/>
            <person name="Cree A."/>
            <person name="Gunaratne P."/>
            <person name="Havlak P."/>
            <person name="Hodgson A."/>
            <person name="Metzker M.L."/>
            <person name="Richards S."/>
            <person name="Scott G."/>
            <person name="Steffen D."/>
            <person name="Sodergren E."/>
            <person name="Wheeler D.A."/>
            <person name="Worley K.C."/>
            <person name="Ainscough R."/>
            <person name="Ambrose K.D."/>
            <person name="Ansari-Lari M.A."/>
            <person name="Aradhya S."/>
            <person name="Ashwell R.I."/>
            <person name="Babbage A.K."/>
            <person name="Bagguley C.L."/>
            <person name="Ballabio A."/>
            <person name="Banerjee R."/>
            <person name="Barker G.E."/>
            <person name="Barlow K.F."/>
            <person name="Barrett I.P."/>
            <person name="Bates K.N."/>
            <person name="Beare D.M."/>
            <person name="Beasley H."/>
            <person name="Beasley O."/>
            <person name="Beck A."/>
            <person name="Bethel G."/>
            <person name="Blechschmidt K."/>
            <person name="Brady N."/>
            <person name="Bray-Allen S."/>
            <person name="Bridgeman A.M."/>
            <person name="Brown A.J."/>
            <person name="Brown M.J."/>
            <person name="Bonnin D."/>
            <person name="Bruford E.A."/>
            <person name="Buhay C."/>
            <person name="Burch P."/>
            <person name="Burford D."/>
            <person name="Burgess J."/>
            <person name="Burrill W."/>
            <person name="Burton J."/>
            <person name="Bye J.M."/>
            <person name="Carder C."/>
            <person name="Carrel L."/>
            <person name="Chako J."/>
            <person name="Chapman J.C."/>
            <person name="Chavez D."/>
            <person name="Chen E."/>
            <person name="Chen G."/>
            <person name="Chen Y."/>
            <person name="Chen Z."/>
            <person name="Chinault C."/>
            <person name="Ciccodicola A."/>
            <person name="Clark S.Y."/>
            <person name="Clarke G."/>
            <person name="Clee C.M."/>
            <person name="Clegg S."/>
            <person name="Clerc-Blankenburg K."/>
            <person name="Clifford K."/>
            <person name="Cobley V."/>
            <person name="Cole C.G."/>
            <person name="Conquer J.S."/>
            <person name="Corby N."/>
            <person name="Connor R.E."/>
            <person name="David R."/>
            <person name="Davies J."/>
            <person name="Davis C."/>
            <person name="Davis J."/>
            <person name="Delgado O."/>
            <person name="Deshazo D."/>
            <person name="Dhami P."/>
            <person name="Ding Y."/>
            <person name="Dinh H."/>
            <person name="Dodsworth S."/>
            <person name="Draper H."/>
            <person name="Dugan-Rocha S."/>
            <person name="Dunham A."/>
            <person name="Dunn M."/>
            <person name="Durbin K.J."/>
            <person name="Dutta I."/>
            <person name="Eades T."/>
            <person name="Ellwood M."/>
            <person name="Emery-Cohen A."/>
            <person name="Errington H."/>
            <person name="Evans K.L."/>
            <person name="Faulkner L."/>
            <person name="Francis F."/>
            <person name="Frankland J."/>
            <person name="Fraser A.E."/>
            <person name="Galgoczy P."/>
            <person name="Gilbert J."/>
            <person name="Gill R."/>
            <person name="Gloeckner G."/>
            <person name="Gregory S.G."/>
            <person name="Gribble S."/>
            <person name="Griffiths C."/>
            <person name="Grocock R."/>
            <person name="Gu Y."/>
            <person name="Gwilliam R."/>
            <person name="Hamilton C."/>
            <person name="Hart E.A."/>
            <person name="Hawes A."/>
            <person name="Heath P.D."/>
            <person name="Heitmann K."/>
            <person name="Hennig S."/>
            <person name="Hernandez J."/>
            <person name="Hinzmann B."/>
            <person name="Ho S."/>
            <person name="Hoffs M."/>
            <person name="Howden P.J."/>
            <person name="Huckle E.J."/>
            <person name="Hume J."/>
            <person name="Hunt P.J."/>
            <person name="Hunt A.R."/>
            <person name="Isherwood J."/>
            <person name="Jacob L."/>
            <person name="Johnson D."/>
            <person name="Jones S."/>
            <person name="de Jong P.J."/>
            <person name="Joseph S.S."/>
            <person name="Keenan S."/>
            <person name="Kelly S."/>
            <person name="Kershaw J.K."/>
            <person name="Khan Z."/>
            <person name="Kioschis P."/>
            <person name="Klages S."/>
            <person name="Knights A.J."/>
            <person name="Kosiura A."/>
            <person name="Kovar-Smith C."/>
            <person name="Laird G.K."/>
            <person name="Langford C."/>
            <person name="Lawlor S."/>
            <person name="Leversha M."/>
            <person name="Lewis L."/>
            <person name="Liu W."/>
            <person name="Lloyd C."/>
            <person name="Lloyd D.M."/>
            <person name="Loulseged H."/>
            <person name="Loveland J.E."/>
            <person name="Lovell J.D."/>
            <person name="Lozado R."/>
            <person name="Lu J."/>
            <person name="Lyne R."/>
            <person name="Ma J."/>
            <person name="Maheshwari M."/>
            <person name="Matthews L.H."/>
            <person name="McDowall J."/>
            <person name="McLaren S."/>
            <person name="McMurray A."/>
            <person name="Meidl P."/>
            <person name="Meitinger T."/>
            <person name="Milne S."/>
            <person name="Miner G."/>
            <person name="Mistry S.L."/>
            <person name="Morgan M."/>
            <person name="Morris S."/>
            <person name="Mueller I."/>
            <person name="Mullikin J.C."/>
            <person name="Nguyen N."/>
            <person name="Nordsiek G."/>
            <person name="Nyakatura G."/>
            <person name="O'dell C.N."/>
            <person name="Okwuonu G."/>
            <person name="Palmer S."/>
            <person name="Pandian R."/>
            <person name="Parker D."/>
            <person name="Parrish J."/>
            <person name="Pasternak S."/>
            <person name="Patel D."/>
            <person name="Pearce A.V."/>
            <person name="Pearson D.M."/>
            <person name="Pelan S.E."/>
            <person name="Perez L."/>
            <person name="Porter K.M."/>
            <person name="Ramsey Y."/>
            <person name="Reichwald K."/>
            <person name="Rhodes S."/>
            <person name="Ridler K.A."/>
            <person name="Schlessinger D."/>
            <person name="Schueler M.G."/>
            <person name="Sehra H.K."/>
            <person name="Shaw-Smith C."/>
            <person name="Shen H."/>
            <person name="Sheridan E.M."/>
            <person name="Shownkeen R."/>
            <person name="Skuce C.D."/>
            <person name="Smith M.L."/>
            <person name="Sotheran E.C."/>
            <person name="Steingruber H.E."/>
            <person name="Steward C.A."/>
            <person name="Storey R."/>
            <person name="Swann R.M."/>
            <person name="Swarbreck D."/>
            <person name="Tabor P.E."/>
            <person name="Taudien S."/>
            <person name="Taylor T."/>
            <person name="Teague B."/>
            <person name="Thomas K."/>
            <person name="Thorpe A."/>
            <person name="Timms K."/>
            <person name="Tracey A."/>
            <person name="Trevanion S."/>
            <person name="Tromans A.C."/>
            <person name="d'Urso M."/>
            <person name="Verduzco D."/>
            <person name="Villasana D."/>
            <person name="Waldron L."/>
            <person name="Wall M."/>
            <person name="Wang Q."/>
            <person name="Warren J."/>
            <person name="Warry G.L."/>
            <person name="Wei X."/>
            <person name="West A."/>
            <person name="Whitehead S.L."/>
            <person name="Whiteley M.N."/>
            <person name="Wilkinson J.E."/>
            <person name="Willey D.L."/>
            <person name="Williams G."/>
            <person name="Williams L."/>
            <person name="Williamson A."/>
            <person name="Williamson H."/>
            <person name="Wilming L."/>
            <person name="Woodmansey R.L."/>
            <person name="Wray P.W."/>
            <person name="Yen J."/>
            <person name="Zhang J."/>
            <person name="Zhou J."/>
            <person name="Zoghbi H."/>
            <person name="Zorilla S."/>
            <person name="Buck D."/>
            <person name="Reinhardt R."/>
            <person name="Poustka A."/>
            <person name="Rosenthal A."/>
            <person name="Lehrach H."/>
            <person name="Meindl A."/>
            <person name="Minx P.J."/>
            <person name="Hillier L.W."/>
            <person name="Willard H.F."/>
            <person name="Wilson R.K."/>
            <person name="Waterston R.H."/>
            <person name="Rice C.M."/>
            <person name="Vaudin M."/>
            <person name="Coulson A."/>
            <person name="Nelson D.L."/>
            <person name="Weinstock G."/>
            <person name="Sulston J.E."/>
            <person name="Durbin R.M."/>
            <person name="Hubbard T."/>
            <person name="Gibbs R.A."/>
            <person name="Beck S."/>
            <person name="Rogers J."/>
            <person name="Bentley D.R."/>
        </authorList>
    </citation>
    <scope>NUCLEOTIDE SEQUENCE [LARGE SCALE GENOMIC DNA]</scope>
</reference>
<reference key="4">
    <citation type="journal article" date="2004" name="Genome Res.">
        <title>The status, quality, and expansion of the NIH full-length cDNA project: the Mammalian Gene Collection (MGC).</title>
        <authorList>
            <consortium name="The MGC Project Team"/>
        </authorList>
    </citation>
    <scope>NUCLEOTIDE SEQUENCE [LARGE SCALE MRNA]</scope>
    <source>
        <tissue>Brain</tissue>
    </source>
</reference>
<dbReference type="EMBL" id="M31423">
    <property type="protein sequence ID" value="AAA51962.1"/>
    <property type="status" value="ALT_SEQ"/>
    <property type="molecule type" value="Genomic_DNA"/>
</dbReference>
<dbReference type="EMBL" id="M16965">
    <property type="protein sequence ID" value="AAA52472.1"/>
    <property type="status" value="ALT_FRAME"/>
    <property type="molecule type" value="mRNA"/>
</dbReference>
<dbReference type="EMBL" id="AL078639">
    <property type="status" value="NOT_ANNOTATED_CDS"/>
    <property type="molecule type" value="Genomic_DNA"/>
</dbReference>
<dbReference type="EMBL" id="BC113472">
    <property type="protein sequence ID" value="AAI13473.1"/>
    <property type="molecule type" value="mRNA"/>
</dbReference>
<dbReference type="EMBL" id="BC113474">
    <property type="protein sequence ID" value="AAI13475.1"/>
    <property type="molecule type" value="mRNA"/>
</dbReference>
<dbReference type="PIR" id="A29770">
    <property type="entry name" value="A29770"/>
</dbReference>
<dbReference type="RefSeq" id="NP_004056.2">
    <property type="nucleotide sequence ID" value="NM_004065.2"/>
</dbReference>
<dbReference type="BioGRID" id="107469">
    <property type="interactions" value="9"/>
</dbReference>
<dbReference type="FunCoup" id="P51861">
    <property type="interactions" value="3"/>
</dbReference>
<dbReference type="IntAct" id="P51861">
    <property type="interactions" value="7"/>
</dbReference>
<dbReference type="iPTMnet" id="P51861"/>
<dbReference type="PhosphoSitePlus" id="P51861"/>
<dbReference type="BioMuta" id="CDR1"/>
<dbReference type="DMDM" id="160380504"/>
<dbReference type="ProteomicsDB" id="56440"/>
<dbReference type="Antibodypedia" id="82643">
    <property type="antibodies" value="17 antibodies from 11 providers"/>
</dbReference>
<dbReference type="DNASU" id="1038"/>
<dbReference type="UCSC" id="uc004fbg.2">
    <property type="organism name" value="human"/>
</dbReference>
<dbReference type="AGR" id="HGNC:1798"/>
<dbReference type="GeneCards" id="CDR1"/>
<dbReference type="HGNC" id="HGNC:1798">
    <property type="gene designation" value="CDR1"/>
</dbReference>
<dbReference type="MIM" id="302650">
    <property type="type" value="gene"/>
</dbReference>
<dbReference type="neXtProt" id="NX_P51861"/>
<dbReference type="PharmGKB" id="PA26330"/>
<dbReference type="VEuPathDB" id="HostDB:ENSG00000288642"/>
<dbReference type="eggNOG" id="ENOG502SGZK">
    <property type="taxonomic scope" value="Eukaryota"/>
</dbReference>
<dbReference type="HOGENOM" id="CLU_1109152_0_0_1"/>
<dbReference type="InParanoid" id="P51861"/>
<dbReference type="OMA" id="TWIFRKT"/>
<dbReference type="OrthoDB" id="9486248at2759"/>
<dbReference type="PAN-GO" id="P51861">
    <property type="GO annotations" value="0 GO annotations based on evolutionary models"/>
</dbReference>
<dbReference type="PhylomeDB" id="P51861"/>
<dbReference type="PathwayCommons" id="P51861"/>
<dbReference type="SignaLink" id="P51861"/>
<dbReference type="BioGRID-ORCS" id="1038">
    <property type="hits" value="12 hits in 758 CRISPR screens"/>
</dbReference>
<dbReference type="ChiTaRS" id="CDR1">
    <property type="organism name" value="human"/>
</dbReference>
<dbReference type="GeneWiki" id="CDR1_(gene)"/>
<dbReference type="GenomeRNAi" id="1038"/>
<dbReference type="Pharos" id="P51861">
    <property type="development level" value="Tbio"/>
</dbReference>
<dbReference type="PRO" id="PR:P51861"/>
<dbReference type="Proteomes" id="UP000005640">
    <property type="component" value="Chromosome X"/>
</dbReference>
<dbReference type="RNAct" id="P51861">
    <property type="molecule type" value="protein"/>
</dbReference>
<dbReference type="Bgee" id="ENSG00000288642">
    <property type="expression patterns" value="Expressed in tendon of biceps brachii and 130 other cell types or tissues"/>
</dbReference>
<dbReference type="InterPro" id="IPR048506">
    <property type="entry name" value="LED_rpt"/>
</dbReference>
<dbReference type="InterPro" id="IPR048507">
    <property type="entry name" value="WKTW_rpt"/>
</dbReference>
<dbReference type="Pfam" id="PF20854">
    <property type="entry name" value="LED_rpt"/>
    <property type="match status" value="1"/>
</dbReference>
<dbReference type="Pfam" id="PF20853">
    <property type="entry name" value="WKTW_rpt"/>
    <property type="match status" value="1"/>
</dbReference>
<feature type="chain" id="PRO_0000089455" description="Cerebellar degeneration-related antigen 1">
    <location>
        <begin position="1"/>
        <end position="262"/>
    </location>
</feature>
<feature type="repeat" description="1">
    <location>
        <begin position="3"/>
        <end position="8"/>
    </location>
</feature>
<feature type="repeat" description="2">
    <location>
        <begin position="9"/>
        <end position="14"/>
    </location>
</feature>
<feature type="repeat" description="3">
    <location>
        <begin position="15"/>
        <end position="20"/>
    </location>
</feature>
<feature type="repeat" description="4">
    <location>
        <begin position="21"/>
        <end position="26"/>
    </location>
</feature>
<feature type="repeat" description="5">
    <location>
        <begin position="27"/>
        <end position="32"/>
    </location>
</feature>
<feature type="repeat" description="6">
    <location>
        <begin position="33"/>
        <end position="38"/>
    </location>
</feature>
<feature type="repeat" description="7">
    <location>
        <begin position="39"/>
        <end position="44"/>
    </location>
</feature>
<feature type="repeat" description="8">
    <location>
        <begin position="45"/>
        <end position="50"/>
    </location>
</feature>
<feature type="repeat" description="9">
    <location>
        <begin position="51"/>
        <end position="56"/>
    </location>
</feature>
<feature type="repeat" description="10">
    <location>
        <begin position="57"/>
        <end position="62"/>
    </location>
</feature>
<feature type="repeat" description="11">
    <location>
        <begin position="63"/>
        <end position="68"/>
    </location>
</feature>
<feature type="repeat" description="12">
    <location>
        <begin position="69"/>
        <end position="74"/>
    </location>
</feature>
<feature type="repeat" description="13">
    <location>
        <begin position="75"/>
        <end position="80"/>
    </location>
</feature>
<feature type="repeat" description="14">
    <location>
        <begin position="81"/>
        <end position="86"/>
    </location>
</feature>
<feature type="repeat" description="15">
    <location>
        <begin position="87"/>
        <end position="92"/>
    </location>
</feature>
<feature type="repeat" description="16">
    <location>
        <begin position="93"/>
        <end position="98"/>
    </location>
</feature>
<feature type="repeat" description="17">
    <location>
        <begin position="99"/>
        <end position="104"/>
    </location>
</feature>
<feature type="repeat" description="18">
    <location>
        <begin position="105"/>
        <end position="110"/>
    </location>
</feature>
<feature type="repeat" description="19">
    <location>
        <begin position="111"/>
        <end position="116"/>
    </location>
</feature>
<feature type="repeat" description="20">
    <location>
        <begin position="117"/>
        <end position="122"/>
    </location>
</feature>
<feature type="repeat" description="21">
    <location>
        <begin position="123"/>
        <end position="128"/>
    </location>
</feature>
<feature type="repeat" description="22">
    <location>
        <begin position="129"/>
        <end position="134"/>
    </location>
</feature>
<feature type="repeat" description="23">
    <location>
        <begin position="135"/>
        <end position="140"/>
    </location>
</feature>
<feature type="repeat" description="1">
    <location>
        <begin position="141"/>
        <end position="146"/>
    </location>
</feature>
<feature type="repeat" description="2">
    <location>
        <begin position="147"/>
        <end position="152"/>
    </location>
</feature>
<feature type="repeat" description="3">
    <location>
        <begin position="153"/>
        <end position="158"/>
    </location>
</feature>
<feature type="repeat" description="4">
    <location>
        <begin position="159"/>
        <end position="164"/>
    </location>
</feature>
<feature type="repeat" description="5">
    <location>
        <begin position="165"/>
        <end position="170"/>
    </location>
</feature>
<feature type="repeat" description="6">
    <location>
        <begin position="171"/>
        <end position="176"/>
    </location>
</feature>
<feature type="repeat" description="1">
    <location>
        <begin position="177"/>
        <end position="182"/>
    </location>
</feature>
<feature type="repeat" description="2">
    <location>
        <begin position="183"/>
        <end position="188"/>
    </location>
</feature>
<feature type="repeat" description="3">
    <location>
        <begin position="189"/>
        <end position="194"/>
    </location>
</feature>
<feature type="repeat" description="4">
    <location>
        <begin position="195"/>
        <end position="200"/>
    </location>
</feature>
<feature type="repeat" description="5">
    <location>
        <begin position="201"/>
        <end position="206"/>
    </location>
</feature>
<feature type="region of interest" description="23 X 6 AA approximate repeats">
    <location>
        <begin position="3"/>
        <end position="140"/>
    </location>
</feature>
<feature type="region of interest" description="6 X 6 AA approximate repeats">
    <location>
        <begin position="141"/>
        <end position="176"/>
    </location>
</feature>
<feature type="region of interest" description="5 X 6 AA approximate repeats">
    <location>
        <begin position="177"/>
        <end position="206"/>
    </location>
</feature>
<evidence type="ECO:0000305" key="1"/>
<protein>
    <recommendedName>
        <fullName>Cerebellar degeneration-related antigen 1</fullName>
    </recommendedName>
    <alternativeName>
        <fullName>CDR34</fullName>
    </alternativeName>
</protein>
<keyword id="KW-1185">Reference proteome</keyword>
<keyword id="KW-0677">Repeat</keyword>
<organism>
    <name type="scientific">Homo sapiens</name>
    <name type="common">Human</name>
    <dbReference type="NCBI Taxonomy" id="9606"/>
    <lineage>
        <taxon>Eukaryota</taxon>
        <taxon>Metazoa</taxon>
        <taxon>Chordata</taxon>
        <taxon>Craniata</taxon>
        <taxon>Vertebrata</taxon>
        <taxon>Euteleostomi</taxon>
        <taxon>Mammalia</taxon>
        <taxon>Eutheria</taxon>
        <taxon>Euarchontoglires</taxon>
        <taxon>Primates</taxon>
        <taxon>Haplorrhini</taxon>
        <taxon>Catarrhini</taxon>
        <taxon>Hominidae</taxon>
        <taxon>Homo</taxon>
    </lineage>
</organism>
<accession>P51861</accession>
<accession>Q5JXH6</accession>
<name>CDR1_HUMAN</name>